<reference key="1">
    <citation type="journal article" date="2011" name="J. Bacteriol.">
        <title>Comparative genomics of 28 Salmonella enterica isolates: evidence for CRISPR-mediated adaptive sublineage evolution.</title>
        <authorList>
            <person name="Fricke W.F."/>
            <person name="Mammel M.K."/>
            <person name="McDermott P.F."/>
            <person name="Tartera C."/>
            <person name="White D.G."/>
            <person name="Leclerc J.E."/>
            <person name="Ravel J."/>
            <person name="Cebula T.A."/>
        </authorList>
    </citation>
    <scope>NUCLEOTIDE SEQUENCE [LARGE SCALE GENOMIC DNA]</scope>
    <source>
        <strain>CT_02021853</strain>
    </source>
</reference>
<feature type="chain" id="PRO_1000147517" description="Bifunctional protein FolD">
    <location>
        <begin position="1"/>
        <end position="288"/>
    </location>
</feature>
<feature type="binding site" evidence="1">
    <location>
        <begin position="166"/>
        <end position="168"/>
    </location>
    <ligand>
        <name>NADP(+)</name>
        <dbReference type="ChEBI" id="CHEBI:58349"/>
    </ligand>
</feature>
<feature type="binding site" evidence="1">
    <location>
        <position position="232"/>
    </location>
    <ligand>
        <name>NADP(+)</name>
        <dbReference type="ChEBI" id="CHEBI:58349"/>
    </ligand>
</feature>
<proteinExistence type="inferred from homology"/>
<organism>
    <name type="scientific">Salmonella dublin (strain CT_02021853)</name>
    <dbReference type="NCBI Taxonomy" id="439851"/>
    <lineage>
        <taxon>Bacteria</taxon>
        <taxon>Pseudomonadati</taxon>
        <taxon>Pseudomonadota</taxon>
        <taxon>Gammaproteobacteria</taxon>
        <taxon>Enterobacterales</taxon>
        <taxon>Enterobacteriaceae</taxon>
        <taxon>Salmonella</taxon>
    </lineage>
</organism>
<keyword id="KW-0028">Amino-acid biosynthesis</keyword>
<keyword id="KW-0368">Histidine biosynthesis</keyword>
<keyword id="KW-0378">Hydrolase</keyword>
<keyword id="KW-0486">Methionine biosynthesis</keyword>
<keyword id="KW-0511">Multifunctional enzyme</keyword>
<keyword id="KW-0521">NADP</keyword>
<keyword id="KW-0554">One-carbon metabolism</keyword>
<keyword id="KW-0560">Oxidoreductase</keyword>
<keyword id="KW-0658">Purine biosynthesis</keyword>
<comment type="function">
    <text evidence="1">Catalyzes the oxidation of 5,10-methylenetetrahydrofolate to 5,10-methenyltetrahydrofolate and then the hydrolysis of 5,10-methenyltetrahydrofolate to 10-formyltetrahydrofolate.</text>
</comment>
<comment type="catalytic activity">
    <reaction evidence="1">
        <text>(6R)-5,10-methylene-5,6,7,8-tetrahydrofolate + NADP(+) = (6R)-5,10-methenyltetrahydrofolate + NADPH</text>
        <dbReference type="Rhea" id="RHEA:22812"/>
        <dbReference type="ChEBI" id="CHEBI:15636"/>
        <dbReference type="ChEBI" id="CHEBI:57455"/>
        <dbReference type="ChEBI" id="CHEBI:57783"/>
        <dbReference type="ChEBI" id="CHEBI:58349"/>
        <dbReference type="EC" id="1.5.1.5"/>
    </reaction>
</comment>
<comment type="catalytic activity">
    <reaction evidence="1">
        <text>(6R)-5,10-methenyltetrahydrofolate + H2O = (6R)-10-formyltetrahydrofolate + H(+)</text>
        <dbReference type="Rhea" id="RHEA:23700"/>
        <dbReference type="ChEBI" id="CHEBI:15377"/>
        <dbReference type="ChEBI" id="CHEBI:15378"/>
        <dbReference type="ChEBI" id="CHEBI:57455"/>
        <dbReference type="ChEBI" id="CHEBI:195366"/>
        <dbReference type="EC" id="3.5.4.9"/>
    </reaction>
</comment>
<comment type="pathway">
    <text evidence="1">One-carbon metabolism; tetrahydrofolate interconversion.</text>
</comment>
<comment type="subunit">
    <text evidence="1">Homodimer.</text>
</comment>
<comment type="similarity">
    <text evidence="1">Belongs to the tetrahydrofolate dehydrogenase/cyclohydrolase family.</text>
</comment>
<evidence type="ECO:0000255" key="1">
    <source>
        <dbReference type="HAMAP-Rule" id="MF_01576"/>
    </source>
</evidence>
<accession>B5FLQ2</accession>
<sequence>MAAKIIDGKTIAQQVRSEVAQKVQARVAAGLRAPGLAVVLVGSNPASQIYVASKRKACDEVGFVSRSYDLPETTSEAELLALIDTLNADNTIDGILVQLPLPAGIDNVKVLERIAPDKDVDGFHPYNVGRLCQRAPRLRPCTPRGIVTLLERYNIDTYGLNAVVIGASNIVGRPMSMELLLAGCTTTVTHRFTKDLRHHVEHADLLIVAVGKPGFIPGEWIKEGAIVIDVGINRLENGKVVGDVVFDEAAARASYITPVPGGVGPMTVATLIENTLQACIEYHDPQGK</sequence>
<dbReference type="EC" id="1.5.1.5" evidence="1"/>
<dbReference type="EC" id="3.5.4.9" evidence="1"/>
<dbReference type="EMBL" id="CP001144">
    <property type="protein sequence ID" value="ACH77265.1"/>
    <property type="molecule type" value="Genomic_DNA"/>
</dbReference>
<dbReference type="RefSeq" id="WP_000729165.1">
    <property type="nucleotide sequence ID" value="NC_011205.1"/>
</dbReference>
<dbReference type="SMR" id="B5FLQ2"/>
<dbReference type="KEGG" id="sed:SeD_A0590"/>
<dbReference type="HOGENOM" id="CLU_034045_2_1_6"/>
<dbReference type="UniPathway" id="UPA00193"/>
<dbReference type="Proteomes" id="UP000008322">
    <property type="component" value="Chromosome"/>
</dbReference>
<dbReference type="GO" id="GO:0005829">
    <property type="term" value="C:cytosol"/>
    <property type="evidence" value="ECO:0007669"/>
    <property type="project" value="TreeGrafter"/>
</dbReference>
<dbReference type="GO" id="GO:0004477">
    <property type="term" value="F:methenyltetrahydrofolate cyclohydrolase activity"/>
    <property type="evidence" value="ECO:0007669"/>
    <property type="project" value="UniProtKB-UniRule"/>
</dbReference>
<dbReference type="GO" id="GO:0004488">
    <property type="term" value="F:methylenetetrahydrofolate dehydrogenase (NADP+) activity"/>
    <property type="evidence" value="ECO:0007669"/>
    <property type="project" value="UniProtKB-UniRule"/>
</dbReference>
<dbReference type="GO" id="GO:0000105">
    <property type="term" value="P:L-histidine biosynthetic process"/>
    <property type="evidence" value="ECO:0007669"/>
    <property type="project" value="UniProtKB-KW"/>
</dbReference>
<dbReference type="GO" id="GO:0009086">
    <property type="term" value="P:methionine biosynthetic process"/>
    <property type="evidence" value="ECO:0007669"/>
    <property type="project" value="UniProtKB-KW"/>
</dbReference>
<dbReference type="GO" id="GO:0006164">
    <property type="term" value="P:purine nucleotide biosynthetic process"/>
    <property type="evidence" value="ECO:0007669"/>
    <property type="project" value="UniProtKB-KW"/>
</dbReference>
<dbReference type="GO" id="GO:0035999">
    <property type="term" value="P:tetrahydrofolate interconversion"/>
    <property type="evidence" value="ECO:0007669"/>
    <property type="project" value="UniProtKB-UniRule"/>
</dbReference>
<dbReference type="CDD" id="cd01080">
    <property type="entry name" value="NAD_bind_m-THF_DH_Cyclohyd"/>
    <property type="match status" value="1"/>
</dbReference>
<dbReference type="FunFam" id="3.40.50.10860:FF:000001">
    <property type="entry name" value="Bifunctional protein FolD"/>
    <property type="match status" value="1"/>
</dbReference>
<dbReference type="FunFam" id="3.40.50.720:FF:000006">
    <property type="entry name" value="Bifunctional protein FolD"/>
    <property type="match status" value="1"/>
</dbReference>
<dbReference type="Gene3D" id="3.40.50.10860">
    <property type="entry name" value="Leucine Dehydrogenase, chain A, domain 1"/>
    <property type="match status" value="1"/>
</dbReference>
<dbReference type="Gene3D" id="3.40.50.720">
    <property type="entry name" value="NAD(P)-binding Rossmann-like Domain"/>
    <property type="match status" value="1"/>
</dbReference>
<dbReference type="HAMAP" id="MF_01576">
    <property type="entry name" value="THF_DHG_CYH"/>
    <property type="match status" value="1"/>
</dbReference>
<dbReference type="InterPro" id="IPR046346">
    <property type="entry name" value="Aminoacid_DH-like_N_sf"/>
</dbReference>
<dbReference type="InterPro" id="IPR036291">
    <property type="entry name" value="NAD(P)-bd_dom_sf"/>
</dbReference>
<dbReference type="InterPro" id="IPR000672">
    <property type="entry name" value="THF_DH/CycHdrlase"/>
</dbReference>
<dbReference type="InterPro" id="IPR020630">
    <property type="entry name" value="THF_DH/CycHdrlase_cat_dom"/>
</dbReference>
<dbReference type="InterPro" id="IPR020867">
    <property type="entry name" value="THF_DH/CycHdrlase_CS"/>
</dbReference>
<dbReference type="InterPro" id="IPR020631">
    <property type="entry name" value="THF_DH/CycHdrlase_NAD-bd_dom"/>
</dbReference>
<dbReference type="NCBIfam" id="NF008058">
    <property type="entry name" value="PRK10792.1"/>
    <property type="match status" value="1"/>
</dbReference>
<dbReference type="NCBIfam" id="NF010783">
    <property type="entry name" value="PRK14186.1"/>
    <property type="match status" value="1"/>
</dbReference>
<dbReference type="PANTHER" id="PTHR48099:SF5">
    <property type="entry name" value="C-1-TETRAHYDROFOLATE SYNTHASE, CYTOPLASMIC"/>
    <property type="match status" value="1"/>
</dbReference>
<dbReference type="PANTHER" id="PTHR48099">
    <property type="entry name" value="C-1-TETRAHYDROFOLATE SYNTHASE, CYTOPLASMIC-RELATED"/>
    <property type="match status" value="1"/>
</dbReference>
<dbReference type="Pfam" id="PF00763">
    <property type="entry name" value="THF_DHG_CYH"/>
    <property type="match status" value="1"/>
</dbReference>
<dbReference type="Pfam" id="PF02882">
    <property type="entry name" value="THF_DHG_CYH_C"/>
    <property type="match status" value="1"/>
</dbReference>
<dbReference type="PRINTS" id="PR00085">
    <property type="entry name" value="THFDHDRGNASE"/>
</dbReference>
<dbReference type="SUPFAM" id="SSF53223">
    <property type="entry name" value="Aminoacid dehydrogenase-like, N-terminal domain"/>
    <property type="match status" value="1"/>
</dbReference>
<dbReference type="SUPFAM" id="SSF51735">
    <property type="entry name" value="NAD(P)-binding Rossmann-fold domains"/>
    <property type="match status" value="1"/>
</dbReference>
<dbReference type="PROSITE" id="PS00766">
    <property type="entry name" value="THF_DHG_CYH_1"/>
    <property type="match status" value="1"/>
</dbReference>
<dbReference type="PROSITE" id="PS00767">
    <property type="entry name" value="THF_DHG_CYH_2"/>
    <property type="match status" value="1"/>
</dbReference>
<protein>
    <recommendedName>
        <fullName evidence="1">Bifunctional protein FolD</fullName>
    </recommendedName>
    <domain>
        <recommendedName>
            <fullName evidence="1">Methylenetetrahydrofolate dehydrogenase</fullName>
            <ecNumber evidence="1">1.5.1.5</ecNumber>
        </recommendedName>
    </domain>
    <domain>
        <recommendedName>
            <fullName evidence="1">Methenyltetrahydrofolate cyclohydrolase</fullName>
            <ecNumber evidence="1">3.5.4.9</ecNumber>
        </recommendedName>
    </domain>
</protein>
<name>FOLD_SALDC</name>
<gene>
    <name evidence="1" type="primary">folD</name>
    <name type="ordered locus">SeD_A0590</name>
</gene>